<evidence type="ECO:0000305" key="1"/>
<feature type="chain" id="PRO_0000147391" description="Iron-sulfur cluster assembly SufBD family protein ycf24">
    <location>
        <begin position="1"/>
        <end position="483"/>
    </location>
</feature>
<organism>
    <name type="scientific">Guillardia theta</name>
    <name type="common">Cryptophyte</name>
    <name type="synonym">Cryptomonas phi</name>
    <dbReference type="NCBI Taxonomy" id="55529"/>
    <lineage>
        <taxon>Eukaryota</taxon>
        <taxon>Cryptophyceae</taxon>
        <taxon>Pyrenomonadales</taxon>
        <taxon>Geminigeraceae</taxon>
        <taxon>Guillardia</taxon>
    </lineage>
</organism>
<comment type="subcellular location">
    <subcellularLocation>
        <location>Plastid</location>
        <location>Chloroplast</location>
    </subcellularLocation>
</comment>
<comment type="similarity">
    <text evidence="1">Belongs to the iron-sulfur cluster assembly SufBD family.</text>
</comment>
<sequence length="483" mass="54023">MSDDLSKRSLRELVSQPYKYGFHTDIENEEFPKGLDEDIIKEISKLKCEPSYMLDFRLKSYILWKKMSLPEWACLTYLNINYQDIVYYSAPKNSTKLDSLEDVDKKILETFDKLGIPLNEQKKLANVAVDAIFDSVSVGTTFKQELSNVGVLFCPLSEATNKYSTLVEKYLGSVVPIGDNYFAALNSAVFSEGSFCYIPPNVKCPLELSTYFRINNENSGQFERTLIIADFNSYVSYLEGCTAPMYDKNQLHAAVVELIALENAEIRYSTVQNWYSGDTNGKGGIYNFVTKRGLCAGKSSKISWTQVETGSAITWKYPSCILVGEDSVGEFYSVALTNNYQQADTGTKMIHVGRGSKSRIISKGISAGYSKNTYRGQVKININALGSINNSQCDSMLIGPYSQANTYPYIQVSNAMSRVEHEASTSKIEEEQLFYFLQRGISVEQAISLLISGFCRDVFVKLPMEFAVEADKLLSVKLEGTVG</sequence>
<accession>O78473</accession>
<keyword id="KW-0150">Chloroplast</keyword>
<keyword id="KW-0934">Plastid</keyword>
<reference key="1">
    <citation type="journal article" date="1999" name="J. Phycol.">
        <title>The atpA gene cluster of a cryptomonad, Guillardia theta: a piece in the puzzle of chloroplast genome development.</title>
        <authorList>
            <person name="Leitsch C.E.W."/>
            <person name="Kowallik K.V."/>
            <person name="Douglas S.E."/>
        </authorList>
    </citation>
    <scope>NUCLEOTIDE SEQUENCE [GENOMIC DNA]</scope>
</reference>
<reference key="2">
    <citation type="journal article" date="1999" name="J. Mol. Evol.">
        <title>The plastid genome of the cryptophyte alga, Guillardia theta: complete sequence and conserved synteny groups confirm its common ancestry with red algae.</title>
        <authorList>
            <person name="Douglas S.E."/>
            <person name="Penny S.L."/>
        </authorList>
    </citation>
    <scope>NUCLEOTIDE SEQUENCE [LARGE SCALE GENOMIC DNA]</scope>
</reference>
<gene>
    <name type="primary">ycf24</name>
</gene>
<geneLocation type="chloroplast"/>
<dbReference type="EMBL" id="AF041468">
    <property type="protein sequence ID" value="AAC35664.1"/>
    <property type="molecule type" value="Genomic_DNA"/>
</dbReference>
<dbReference type="RefSeq" id="NP_050730.1">
    <property type="nucleotide sequence ID" value="NC_000926.1"/>
</dbReference>
<dbReference type="SMR" id="O78473"/>
<dbReference type="GeneID" id="857035"/>
<dbReference type="HOGENOM" id="CLU_026231_0_0_1"/>
<dbReference type="OMA" id="YYSAPKQ"/>
<dbReference type="GO" id="GO:0009507">
    <property type="term" value="C:chloroplast"/>
    <property type="evidence" value="ECO:0007669"/>
    <property type="project" value="UniProtKB-SubCell"/>
</dbReference>
<dbReference type="GO" id="GO:0016226">
    <property type="term" value="P:iron-sulfur cluster assembly"/>
    <property type="evidence" value="ECO:0007669"/>
    <property type="project" value="InterPro"/>
</dbReference>
<dbReference type="InterPro" id="IPR055346">
    <property type="entry name" value="Fe-S_cluster_assembly_SufBD"/>
</dbReference>
<dbReference type="InterPro" id="IPR010231">
    <property type="entry name" value="SUF_FeS_clus_asmbl_SufB"/>
</dbReference>
<dbReference type="InterPro" id="IPR000825">
    <property type="entry name" value="SUF_FeS_clus_asmbl_SufBD_core"/>
</dbReference>
<dbReference type="InterPro" id="IPR037284">
    <property type="entry name" value="SUF_FeS_clus_asmbl_SufBD_sf"/>
</dbReference>
<dbReference type="InterPro" id="IPR045595">
    <property type="entry name" value="SufBD_N"/>
</dbReference>
<dbReference type="NCBIfam" id="NF008773">
    <property type="entry name" value="PRK11814.1"/>
    <property type="match status" value="1"/>
</dbReference>
<dbReference type="NCBIfam" id="TIGR01980">
    <property type="entry name" value="sufB"/>
    <property type="match status" value="1"/>
</dbReference>
<dbReference type="PANTHER" id="PTHR30508">
    <property type="entry name" value="FES CLUSTER ASSEMBLY PROTEIN SUF"/>
    <property type="match status" value="1"/>
</dbReference>
<dbReference type="PANTHER" id="PTHR30508:SF1">
    <property type="entry name" value="UPF0051 PROTEIN ABCI8, CHLOROPLASTIC-RELATED"/>
    <property type="match status" value="1"/>
</dbReference>
<dbReference type="Pfam" id="PF01458">
    <property type="entry name" value="SUFBD_core"/>
    <property type="match status" value="1"/>
</dbReference>
<dbReference type="Pfam" id="PF19295">
    <property type="entry name" value="SufBD_N"/>
    <property type="match status" value="1"/>
</dbReference>
<dbReference type="SUPFAM" id="SSF101960">
    <property type="entry name" value="Stabilizer of iron transporter SufD"/>
    <property type="match status" value="1"/>
</dbReference>
<name>YCF24_GUITH</name>
<protein>
    <recommendedName>
        <fullName>Iron-sulfur cluster assembly SufBD family protein ycf24</fullName>
    </recommendedName>
</protein>
<proteinExistence type="inferred from homology"/>